<accession>P41263</accession>
<organism>
    <name type="scientific">Gallus gallus</name>
    <name type="common">Chicken</name>
    <dbReference type="NCBI Taxonomy" id="9031"/>
    <lineage>
        <taxon>Eukaryota</taxon>
        <taxon>Metazoa</taxon>
        <taxon>Chordata</taxon>
        <taxon>Craniata</taxon>
        <taxon>Vertebrata</taxon>
        <taxon>Euteleostomi</taxon>
        <taxon>Archelosauria</taxon>
        <taxon>Archosauria</taxon>
        <taxon>Dinosauria</taxon>
        <taxon>Saurischia</taxon>
        <taxon>Theropoda</taxon>
        <taxon>Coelurosauria</taxon>
        <taxon>Aves</taxon>
        <taxon>Neognathae</taxon>
        <taxon>Galloanserae</taxon>
        <taxon>Galliformes</taxon>
        <taxon>Phasianidae</taxon>
        <taxon>Phasianinae</taxon>
        <taxon>Gallus</taxon>
    </lineage>
</organism>
<dbReference type="EMBL" id="X77960">
    <property type="protein sequence ID" value="CAA54922.1"/>
    <property type="molecule type" value="mRNA"/>
</dbReference>
<dbReference type="PIR" id="I50675">
    <property type="entry name" value="I50675"/>
</dbReference>
<dbReference type="RefSeq" id="NP_990569.1">
    <property type="nucleotide sequence ID" value="NM_205238.2"/>
</dbReference>
<dbReference type="PDB" id="1IIU">
    <property type="method" value="X-ray"/>
    <property type="resolution" value="2.50 A"/>
    <property type="chains" value="A=24-196"/>
</dbReference>
<dbReference type="PDBsum" id="1IIU"/>
<dbReference type="SMR" id="P41263"/>
<dbReference type="FunCoup" id="P41263">
    <property type="interactions" value="191"/>
</dbReference>
<dbReference type="IntAct" id="P41263">
    <property type="interactions" value="1"/>
</dbReference>
<dbReference type="STRING" id="9031.ENSGALP00000010694"/>
<dbReference type="PaxDb" id="9031-ENSGALP00000010694"/>
<dbReference type="Ensembl" id="ENSGALT00010049196.1">
    <property type="protein sequence ID" value="ENSGALP00010029086.1"/>
    <property type="gene ID" value="ENSGALG00010020357.1"/>
</dbReference>
<dbReference type="GeneID" id="396166"/>
<dbReference type="KEGG" id="gga:396166"/>
<dbReference type="CTD" id="5950"/>
<dbReference type="VEuPathDB" id="HostDB:geneid_396166"/>
<dbReference type="eggNOG" id="ENOG502RXEW">
    <property type="taxonomic scope" value="Eukaryota"/>
</dbReference>
<dbReference type="GeneTree" id="ENSGT00510000047107"/>
<dbReference type="HOGENOM" id="CLU_094618_0_0_1"/>
<dbReference type="InParanoid" id="P41263"/>
<dbReference type="OrthoDB" id="9923952at2759"/>
<dbReference type="PhylomeDB" id="P41263"/>
<dbReference type="TreeFam" id="TF331445"/>
<dbReference type="Reactome" id="R-GGA-2453902">
    <property type="pathway name" value="The canonical retinoid cycle in rods (twilight vision)"/>
</dbReference>
<dbReference type="Reactome" id="R-GGA-975634">
    <property type="pathway name" value="Retinoid metabolism and transport"/>
</dbReference>
<dbReference type="EvolutionaryTrace" id="P41263"/>
<dbReference type="PRO" id="PR:P41263"/>
<dbReference type="Proteomes" id="UP000000539">
    <property type="component" value="Chromosome 6"/>
</dbReference>
<dbReference type="Bgee" id="ENSGALG00000006629">
    <property type="expression patterns" value="Expressed in liver and 10 other cell types or tissues"/>
</dbReference>
<dbReference type="GO" id="GO:0030136">
    <property type="term" value="C:clathrin-coated vesicle"/>
    <property type="evidence" value="ECO:0000314"/>
    <property type="project" value="AgBase"/>
</dbReference>
<dbReference type="GO" id="GO:0070062">
    <property type="term" value="C:extracellular exosome"/>
    <property type="evidence" value="ECO:0000255"/>
    <property type="project" value="AgBase"/>
</dbReference>
<dbReference type="GO" id="GO:0005615">
    <property type="term" value="C:extracellular space"/>
    <property type="evidence" value="ECO:0000314"/>
    <property type="project" value="AgBase"/>
</dbReference>
<dbReference type="GO" id="GO:0060417">
    <property type="term" value="C:yolk"/>
    <property type="evidence" value="ECO:0000314"/>
    <property type="project" value="AgBase"/>
</dbReference>
<dbReference type="GO" id="GO:0060418">
    <property type="term" value="C:yolk plasma"/>
    <property type="evidence" value="ECO:0000314"/>
    <property type="project" value="AgBase"/>
</dbReference>
<dbReference type="GO" id="GO:0019904">
    <property type="term" value="F:protein domain specific binding"/>
    <property type="evidence" value="ECO:0000353"/>
    <property type="project" value="AgBase"/>
</dbReference>
<dbReference type="GO" id="GO:0016918">
    <property type="term" value="F:retinal binding"/>
    <property type="evidence" value="ECO:0007669"/>
    <property type="project" value="UniProtKB-KW"/>
</dbReference>
<dbReference type="GO" id="GO:0019841">
    <property type="term" value="F:retinol binding"/>
    <property type="evidence" value="ECO:0000314"/>
    <property type="project" value="AgBase"/>
</dbReference>
<dbReference type="GO" id="GO:0034632">
    <property type="term" value="F:retinol transmembrane transporter activity"/>
    <property type="evidence" value="ECO:0000305"/>
    <property type="project" value="AgBase"/>
</dbReference>
<dbReference type="GO" id="GO:0005102">
    <property type="term" value="F:signaling receptor binding"/>
    <property type="evidence" value="ECO:0000314"/>
    <property type="project" value="AgBase"/>
</dbReference>
<dbReference type="GO" id="GO:0001654">
    <property type="term" value="P:eye development"/>
    <property type="evidence" value="ECO:0000255"/>
    <property type="project" value="AgBase"/>
</dbReference>
<dbReference type="GO" id="GO:0006094">
    <property type="term" value="P:gluconeogenesis"/>
    <property type="evidence" value="ECO:0000255"/>
    <property type="project" value="AgBase"/>
</dbReference>
<dbReference type="GO" id="GO:0042593">
    <property type="term" value="P:glucose homeostasis"/>
    <property type="evidence" value="ECO:0000255"/>
    <property type="project" value="AgBase"/>
</dbReference>
<dbReference type="GO" id="GO:0030277">
    <property type="term" value="P:maintenance of gastrointestinal epithelium"/>
    <property type="evidence" value="ECO:0000255"/>
    <property type="project" value="AgBase"/>
</dbReference>
<dbReference type="GO" id="GO:0001555">
    <property type="term" value="P:oocyte growth"/>
    <property type="evidence" value="ECO:0000270"/>
    <property type="project" value="AgBase"/>
</dbReference>
<dbReference type="GO" id="GO:0032024">
    <property type="term" value="P:positive regulation of insulin secretion"/>
    <property type="evidence" value="ECO:0000255"/>
    <property type="project" value="AgBase"/>
</dbReference>
<dbReference type="GO" id="GO:0065003">
    <property type="term" value="P:protein-containing complex assembly"/>
    <property type="evidence" value="ECO:0000314"/>
    <property type="project" value="AgBase"/>
</dbReference>
<dbReference type="GO" id="GO:0043627">
    <property type="term" value="P:response to estrogen"/>
    <property type="evidence" value="ECO:0000314"/>
    <property type="project" value="AgBase"/>
</dbReference>
<dbReference type="GO" id="GO:0032526">
    <property type="term" value="P:response to retinoic acid"/>
    <property type="evidence" value="ECO:0000255"/>
    <property type="project" value="AgBase"/>
</dbReference>
<dbReference type="GO" id="GO:0009615">
    <property type="term" value="P:response to virus"/>
    <property type="evidence" value="ECO:0000314"/>
    <property type="project" value="AgBase"/>
</dbReference>
<dbReference type="GO" id="GO:0033189">
    <property type="term" value="P:response to vitamin A"/>
    <property type="evidence" value="ECO:0000314"/>
    <property type="project" value="AgBase"/>
</dbReference>
<dbReference type="GO" id="GO:0042572">
    <property type="term" value="P:retinol metabolic process"/>
    <property type="evidence" value="ECO:0000255"/>
    <property type="project" value="AgBase"/>
</dbReference>
<dbReference type="GO" id="GO:0034633">
    <property type="term" value="P:retinol transport"/>
    <property type="evidence" value="ECO:0000318"/>
    <property type="project" value="GO_Central"/>
</dbReference>
<dbReference type="CDD" id="cd00743">
    <property type="entry name" value="lipocalin_RBP_like"/>
    <property type="match status" value="1"/>
</dbReference>
<dbReference type="FunFam" id="2.40.128.20:FF:000004">
    <property type="entry name" value="Retinol-binding protein 4"/>
    <property type="match status" value="1"/>
</dbReference>
<dbReference type="Gene3D" id="2.40.128.20">
    <property type="match status" value="1"/>
</dbReference>
<dbReference type="InterPro" id="IPR012674">
    <property type="entry name" value="Calycin"/>
</dbReference>
<dbReference type="InterPro" id="IPR022271">
    <property type="entry name" value="Lipocalin_ApoD"/>
</dbReference>
<dbReference type="InterPro" id="IPR022272">
    <property type="entry name" value="Lipocalin_CS"/>
</dbReference>
<dbReference type="InterPro" id="IPR000566">
    <property type="entry name" value="Lipocln_cytosolic_FA-bd_dom"/>
</dbReference>
<dbReference type="InterPro" id="IPR002449">
    <property type="entry name" value="Retinol-bd/Purpurin"/>
</dbReference>
<dbReference type="PANTHER" id="PTHR11873">
    <property type="entry name" value="RETINOL-BINDING PROTEIN 4"/>
    <property type="match status" value="1"/>
</dbReference>
<dbReference type="PANTHER" id="PTHR11873:SF2">
    <property type="entry name" value="RETINOL-BINDING PROTEIN 4"/>
    <property type="match status" value="1"/>
</dbReference>
<dbReference type="Pfam" id="PF00061">
    <property type="entry name" value="Lipocalin"/>
    <property type="match status" value="1"/>
</dbReference>
<dbReference type="PIRSF" id="PIRSF036893">
    <property type="entry name" value="Lipocalin_ApoD"/>
    <property type="match status" value="1"/>
</dbReference>
<dbReference type="PIRSF" id="PIRSF500204">
    <property type="entry name" value="RBP_purpurin"/>
    <property type="match status" value="1"/>
</dbReference>
<dbReference type="PRINTS" id="PR00179">
    <property type="entry name" value="LIPOCALIN"/>
</dbReference>
<dbReference type="PRINTS" id="PR01174">
    <property type="entry name" value="RETINOLBNDNG"/>
</dbReference>
<dbReference type="SUPFAM" id="SSF50814">
    <property type="entry name" value="Lipocalins"/>
    <property type="match status" value="1"/>
</dbReference>
<dbReference type="PROSITE" id="PS00213">
    <property type="entry name" value="LIPOCALIN"/>
    <property type="match status" value="1"/>
</dbReference>
<proteinExistence type="evidence at protein level"/>
<gene>
    <name type="primary">RBP4</name>
</gene>
<reference key="1">
    <citation type="journal article" date="1995" name="DNA Cell Biol.">
        <title>Retinol in avian oogenesis: molecular properties of the carrier protein.</title>
        <authorList>
            <person name="Vieira A.V."/>
            <person name="Kuchler K."/>
            <person name="Schneider W.J."/>
        </authorList>
    </citation>
    <scope>NUCLEOTIDE SEQUENCE [MRNA]</scope>
</reference>
<reference evidence="5" key="2">
    <citation type="journal article" date="2001" name="Biochim. Biophys. Acta">
        <title>Structure of chicken plasma retinol-binding protein.</title>
        <authorList>
            <person name="Zanotti G."/>
            <person name="Calderone V."/>
            <person name="Beda M."/>
            <person name="Malpeli G."/>
            <person name="Folli C."/>
            <person name="Berni R."/>
        </authorList>
    </citation>
    <scope>X-RAY CRYSTALLOGRAPHY (2.5 ANGSTROMS) OF 24-196 IN COMPLEX WITH RETINOL</scope>
    <scope>SUBCELLULAR LOCATION</scope>
    <scope>DISULFIDE BONDS</scope>
</reference>
<evidence type="ECO:0000250" key="1">
    <source>
        <dbReference type="UniProtKB" id="P02753"/>
    </source>
</evidence>
<evidence type="ECO:0000255" key="2"/>
<evidence type="ECO:0000269" key="3">
    <source>
    </source>
</evidence>
<evidence type="ECO:0000305" key="4"/>
<evidence type="ECO:0007744" key="5">
    <source>
        <dbReference type="PDB" id="1IIU"/>
    </source>
</evidence>
<evidence type="ECO:0007829" key="6">
    <source>
        <dbReference type="PDB" id="1IIU"/>
    </source>
</evidence>
<comment type="function">
    <text evidence="1">Retinol-binding protein that mediates retinol transport in blood plasma. Delivers retinol from the liver stores to the peripheral tissues. Transfers the bound all-trans retinol to STRA6, that then facilitates retinol transport across the cell membrane.</text>
</comment>
<comment type="subunit">
    <text evidence="1">Interacts with TTR. Interaction with TTR prevents its loss by filtration through the kidney glomeruli. Interacts with STRA6.</text>
</comment>
<comment type="interaction">
    <interactant intactId="EBI-6622456">
        <id>P41263</id>
    </interactant>
    <interactant intactId="EBI-6622511">
        <id>P27731</id>
        <label>TTR</label>
    </interactant>
    <organismsDiffer>false</organismsDiffer>
    <experiments>4</experiments>
</comment>
<comment type="subcellular location">
    <subcellularLocation>
        <location evidence="3">Secreted</location>
    </subcellularLocation>
</comment>
<comment type="similarity">
    <text evidence="4">Belongs to the calycin superfamily. Lipocalin family.</text>
</comment>
<feature type="signal peptide" evidence="2">
    <location>
        <begin position="1"/>
        <end position="21"/>
    </location>
</feature>
<feature type="chain" id="PRO_0000017971" description="Retinol-binding protein 4">
    <location>
        <begin position="22"/>
        <end position="196"/>
    </location>
</feature>
<feature type="binding site" evidence="3 5">
    <location>
        <position position="119"/>
    </location>
    <ligand>
        <name>substrate</name>
    </ligand>
</feature>
<feature type="disulfide bond" evidence="3 5">
    <location>
        <begin position="25"/>
        <end position="181"/>
    </location>
</feature>
<feature type="disulfide bond" evidence="3 5">
    <location>
        <begin position="91"/>
        <end position="195"/>
    </location>
</feature>
<feature type="disulfide bond" evidence="3 5">
    <location>
        <begin position="141"/>
        <end position="150"/>
    </location>
</feature>
<feature type="helix" evidence="6">
    <location>
        <begin position="27"/>
        <end position="29"/>
    </location>
</feature>
<feature type="helix" evidence="6">
    <location>
        <begin position="38"/>
        <end position="41"/>
    </location>
</feature>
<feature type="strand" evidence="6">
    <location>
        <begin position="43"/>
        <end position="51"/>
    </location>
</feature>
<feature type="strand" evidence="6">
    <location>
        <begin position="60"/>
        <end position="68"/>
    </location>
</feature>
<feature type="strand" evidence="6">
    <location>
        <begin position="74"/>
        <end position="83"/>
    </location>
</feature>
<feature type="strand" evidence="6">
    <location>
        <begin position="89"/>
        <end position="99"/>
    </location>
</feature>
<feature type="strand" evidence="6">
    <location>
        <begin position="106"/>
        <end position="118"/>
    </location>
</feature>
<feature type="strand" evidence="6">
    <location>
        <begin position="121"/>
        <end position="130"/>
    </location>
</feature>
<feature type="strand" evidence="6">
    <location>
        <begin position="132"/>
        <end position="144"/>
    </location>
</feature>
<feature type="strand" evidence="6">
    <location>
        <begin position="148"/>
        <end position="161"/>
    </location>
</feature>
<feature type="helix" evidence="6">
    <location>
        <begin position="167"/>
        <end position="178"/>
    </location>
</feature>
<feature type="turn" evidence="6">
    <location>
        <begin position="179"/>
        <end position="181"/>
    </location>
</feature>
<sequence>MAYTWRALLLLALAFLGSSMAERDCRVSSFKVKENFDKNRYSGTWYAMAKKDPEGLFLQDNVVAQFTVDENGQMSATAKGRVRLFNNWDVCADMIGSFTDTEDPAKFKMKYWGVASFLQKGNDDHWVVDTDYDTYALHYSCRELNEDGTCADSYSFVFSRDPKGLPPEAQKIVRQRQIDLCLDRKYRVIVHNGFCS</sequence>
<name>RET4_CHICK</name>
<keyword id="KW-0002">3D-structure</keyword>
<keyword id="KW-1015">Disulfide bond</keyword>
<keyword id="KW-1185">Reference proteome</keyword>
<keyword id="KW-0683">Retinol-binding</keyword>
<keyword id="KW-0964">Secreted</keyword>
<keyword id="KW-0732">Signal</keyword>
<keyword id="KW-0813">Transport</keyword>
<keyword id="KW-0845">Vitamin A</keyword>
<protein>
    <recommendedName>
        <fullName>Retinol-binding protein 4</fullName>
    </recommendedName>
    <alternativeName>
        <fullName>Plasma retinol-binding protein</fullName>
        <shortName>PRBP</shortName>
        <shortName>RBP</shortName>
    </alternativeName>
</protein>